<organism>
    <name type="scientific">Hepatitis B virus genotype F2 (isolate Brazil/w4B)</name>
    <name type="common">HBV-F</name>
    <dbReference type="NCBI Taxonomy" id="45410"/>
    <lineage>
        <taxon>Viruses</taxon>
        <taxon>Riboviria</taxon>
        <taxon>Pararnavirae</taxon>
        <taxon>Artverviricota</taxon>
        <taxon>Revtraviricetes</taxon>
        <taxon>Blubervirales</taxon>
        <taxon>Hepadnaviridae</taxon>
        <taxon>Orthohepadnavirus</taxon>
        <taxon>Hepatitis B virus</taxon>
    </lineage>
</organism>
<sequence>MQLFHLCLIIFCSCPTVQASKLCLGWLWGMDIDPYKEFGASVELLSFLPSDFFPSVRDLLDTASALYRDALESPEHCTPNHTALRQAILCWGELMTLASWVGNNLEDPAARDLVVNYVNTNMGLKIRQLLWFHISCLTFGRETVLEYLVSFGVWIRTPPAYRPPNAPILSTLPETTVVRRRGRSPRRRTPSPRRRRSQSPRRRRSQSPASQC</sequence>
<evidence type="ECO:0000250" key="1"/>
<evidence type="ECO:0000255" key="2">
    <source>
        <dbReference type="HAMAP-Rule" id="MF_04076"/>
    </source>
</evidence>
<evidence type="ECO:0000256" key="3">
    <source>
        <dbReference type="SAM" id="MobiDB-lite"/>
    </source>
</evidence>
<accession>Q05495</accession>
<feature type="signal peptide" evidence="2">
    <location>
        <begin position="1"/>
        <end position="19"/>
    </location>
</feature>
<feature type="chain" id="PRO_0000222321" description="External core antigen" evidence="2">
    <location>
        <begin position="20"/>
        <end position="212"/>
    </location>
</feature>
<feature type="propeptide" id="PRO_0000324732" evidence="1">
    <location>
        <begin position="184"/>
        <end position="212"/>
    </location>
</feature>
<feature type="repeat" description="1">
    <location>
        <begin position="184"/>
        <end position="190"/>
    </location>
</feature>
<feature type="repeat" description="2">
    <location>
        <begin position="191"/>
        <end position="198"/>
    </location>
</feature>
<feature type="repeat" description="3">
    <location>
        <begin position="199"/>
        <end position="206"/>
    </location>
</feature>
<feature type="region of interest" description="HBEAG" evidence="2">
    <location>
        <begin position="25"/>
        <end position="27"/>
    </location>
</feature>
<feature type="region of interest" description="Disordered" evidence="3">
    <location>
        <begin position="165"/>
        <end position="212"/>
    </location>
</feature>
<feature type="region of interest" description="3 X 8 AA repeats of S-P-R-R-R-R-S-Q">
    <location>
        <begin position="184"/>
        <end position="206"/>
    </location>
</feature>
<feature type="compositionally biased region" description="Basic residues" evidence="3">
    <location>
        <begin position="178"/>
        <end position="205"/>
    </location>
</feature>
<feature type="site" description="Cleavage; by host" evidence="2">
    <location>
        <begin position="183"/>
        <end position="184"/>
    </location>
</feature>
<feature type="disulfide bond" description="Interchain" evidence="2">
    <location>
        <position position="77"/>
    </location>
</feature>
<feature type="disulfide bond" description="Interchain" evidence="2">
    <location>
        <position position="90"/>
    </location>
</feature>
<name>HBEAG_HBVF1</name>
<dbReference type="EMBL" id="X69798">
    <property type="protein sequence ID" value="CAA49452.1"/>
    <property type="molecule type" value="Genomic_DNA"/>
</dbReference>
<dbReference type="PIR" id="JQ2227">
    <property type="entry name" value="JQ2227"/>
</dbReference>
<dbReference type="SMR" id="Q05495"/>
<dbReference type="Proteomes" id="UP000008284">
    <property type="component" value="Segment"/>
</dbReference>
<dbReference type="GO" id="GO:0005576">
    <property type="term" value="C:extracellular region"/>
    <property type="evidence" value="ECO:0007669"/>
    <property type="project" value="UniProtKB-SubCell"/>
</dbReference>
<dbReference type="GO" id="GO:0043657">
    <property type="term" value="C:host cell"/>
    <property type="evidence" value="ECO:0007669"/>
    <property type="project" value="GOC"/>
</dbReference>
<dbReference type="GO" id="GO:0030430">
    <property type="term" value="C:host cell cytoplasm"/>
    <property type="evidence" value="ECO:0007669"/>
    <property type="project" value="UniProtKB-UniRule"/>
</dbReference>
<dbReference type="GO" id="GO:0042025">
    <property type="term" value="C:host cell nucleus"/>
    <property type="evidence" value="ECO:0007669"/>
    <property type="project" value="UniProtKB-SubCell"/>
</dbReference>
<dbReference type="GO" id="GO:0039619">
    <property type="term" value="C:T=4 icosahedral viral capsid"/>
    <property type="evidence" value="ECO:0007669"/>
    <property type="project" value="UniProtKB-UniRule"/>
</dbReference>
<dbReference type="GO" id="GO:0003677">
    <property type="term" value="F:DNA binding"/>
    <property type="evidence" value="ECO:0007669"/>
    <property type="project" value="UniProtKB-UniRule"/>
</dbReference>
<dbReference type="GO" id="GO:0003723">
    <property type="term" value="F:RNA binding"/>
    <property type="evidence" value="ECO:0007669"/>
    <property type="project" value="UniProtKB-UniRule"/>
</dbReference>
<dbReference type="GO" id="GO:0005198">
    <property type="term" value="F:structural molecule activity"/>
    <property type="evidence" value="ECO:0007669"/>
    <property type="project" value="UniProtKB-UniRule"/>
</dbReference>
<dbReference type="GO" id="GO:0075521">
    <property type="term" value="P:microtubule-dependent intracellular transport of viral material towards nucleus"/>
    <property type="evidence" value="ECO:0007669"/>
    <property type="project" value="UniProtKB-UniRule"/>
</dbReference>
<dbReference type="GO" id="GO:0046718">
    <property type="term" value="P:symbiont entry into host cell"/>
    <property type="evidence" value="ECO:0007669"/>
    <property type="project" value="UniProtKB-UniRule"/>
</dbReference>
<dbReference type="GO" id="GO:0075732">
    <property type="term" value="P:viral penetration into host nucleus"/>
    <property type="evidence" value="ECO:0007669"/>
    <property type="project" value="UniProtKB-UniRule"/>
</dbReference>
<dbReference type="FunFam" id="1.10.4090.10:FF:000001">
    <property type="entry name" value="Capsid protein"/>
    <property type="match status" value="1"/>
</dbReference>
<dbReference type="Gene3D" id="1.10.4090.10">
    <property type="entry name" value="Viral capsid, core domain supefamily, Hepatitis B virus"/>
    <property type="match status" value="1"/>
</dbReference>
<dbReference type="HAMAP" id="MF_04076">
    <property type="entry name" value="HBV_HBEAG"/>
    <property type="match status" value="1"/>
</dbReference>
<dbReference type="InterPro" id="IPR013195">
    <property type="entry name" value="Hepatitis_B_virus_capsid_N"/>
</dbReference>
<dbReference type="InterPro" id="IPR002006">
    <property type="entry name" value="Hepatitis_core"/>
</dbReference>
<dbReference type="InterPro" id="IPR036459">
    <property type="entry name" value="Viral_capsid_core_dom_sf_HBV"/>
</dbReference>
<dbReference type="Pfam" id="PF08290">
    <property type="entry name" value="Hep_core_N"/>
    <property type="match status" value="1"/>
</dbReference>
<dbReference type="Pfam" id="PF00906">
    <property type="entry name" value="Hepatitis_core"/>
    <property type="match status" value="3"/>
</dbReference>
<dbReference type="SUPFAM" id="SSF47852">
    <property type="entry name" value="Hepatitis B viral capsid (hbcag)"/>
    <property type="match status" value="1"/>
</dbReference>
<reference key="1">
    <citation type="journal article" date="1993" name="J. Gen. Virol.">
        <title>Identification of a new hepatitis B virus (HBV) genotype from Brazil that expresses HBV surface antigen subtype adw4.</title>
        <authorList>
            <person name="Naumann H."/>
            <person name="Schaefer S."/>
            <person name="Yoshida C.F.T."/>
            <person name="Gaspar A.M.C."/>
            <person name="Repp R."/>
            <person name="Gerlich W.H."/>
        </authorList>
    </citation>
    <scope>NUCLEOTIDE SEQUENCE [GENOMIC DNA]</scope>
</reference>
<keyword id="KW-0024">Alternative initiation</keyword>
<keyword id="KW-1015">Disulfide bond</keyword>
<keyword id="KW-1048">Host nucleus</keyword>
<keyword id="KW-0945">Host-virus interaction</keyword>
<keyword id="KW-0677">Repeat</keyword>
<keyword id="KW-0964">Secreted</keyword>
<keyword id="KW-0732">Signal</keyword>
<keyword id="KW-0899">Viral immunoevasion</keyword>
<gene>
    <name evidence="2" type="primary">C</name>
</gene>
<organismHost>
    <name type="scientific">Homo sapiens</name>
    <name type="common">Human</name>
    <dbReference type="NCBI Taxonomy" id="9606"/>
</organismHost>
<organismHost>
    <name type="scientific">Pan troglodytes</name>
    <name type="common">Chimpanzee</name>
    <dbReference type="NCBI Taxonomy" id="9598"/>
</organismHost>
<comment type="function">
    <text evidence="2">May regulate immune response to the intracellular capsid in acting as a T-cell tolerogen, by having an immunoregulatory effect which prevents destruction of infected cells by cytotoxic T-cells. This immune regulation may predispose to chronicity during perinatal infections and prevent severe liver injury during adult infections.</text>
</comment>
<comment type="subunit">
    <text evidence="2">Homodimerizes.</text>
</comment>
<comment type="subcellular location">
    <subcellularLocation>
        <location evidence="2">Secreted</location>
    </subcellularLocation>
    <subcellularLocation>
        <location evidence="2">Host nucleus</location>
    </subcellularLocation>
</comment>
<comment type="alternative products">
    <event type="alternative initiation"/>
    <isoform>
        <id>Q05495-1</id>
        <name>External core antigen</name>
        <sequence type="displayed"/>
    </isoform>
    <isoform>
        <id>P0C6I4-1</id>
        <name>Capsid protein</name>
        <sequence type="external"/>
    </isoform>
</comment>
<comment type="PTM">
    <text evidence="2">Phosphorylated.</text>
</comment>
<comment type="PTM">
    <text evidence="2">Cleaved by host furin.</text>
</comment>
<comment type="similarity">
    <text evidence="2">Belongs to the orthohepadnavirus precore antigen family.</text>
</comment>
<proteinExistence type="inferred from homology"/>
<protein>
    <recommendedName>
        <fullName evidence="2">External core antigen</fullName>
    </recommendedName>
    <alternativeName>
        <fullName evidence="2">HBeAg</fullName>
    </alternativeName>
    <alternativeName>
        <fullName evidence="2">Precore protein</fullName>
    </alternativeName>
    <alternativeName>
        <fullName evidence="2">p25</fullName>
    </alternativeName>
</protein>